<comment type="catalytic activity">
    <reaction evidence="1">
        <text>tRNA(Cys) + L-cysteine + ATP = L-cysteinyl-tRNA(Cys) + AMP + diphosphate</text>
        <dbReference type="Rhea" id="RHEA:17773"/>
        <dbReference type="Rhea" id="RHEA-COMP:9661"/>
        <dbReference type="Rhea" id="RHEA-COMP:9679"/>
        <dbReference type="ChEBI" id="CHEBI:30616"/>
        <dbReference type="ChEBI" id="CHEBI:33019"/>
        <dbReference type="ChEBI" id="CHEBI:35235"/>
        <dbReference type="ChEBI" id="CHEBI:78442"/>
        <dbReference type="ChEBI" id="CHEBI:78517"/>
        <dbReference type="ChEBI" id="CHEBI:456215"/>
        <dbReference type="EC" id="6.1.1.16"/>
    </reaction>
</comment>
<comment type="cofactor">
    <cofactor evidence="1">
        <name>Zn(2+)</name>
        <dbReference type="ChEBI" id="CHEBI:29105"/>
    </cofactor>
    <text evidence="1">Binds 1 zinc ion per subunit.</text>
</comment>
<comment type="subunit">
    <text evidence="1">Monomer.</text>
</comment>
<comment type="subcellular location">
    <subcellularLocation>
        <location evidence="1">Cytoplasm</location>
    </subcellularLocation>
</comment>
<comment type="similarity">
    <text evidence="1">Belongs to the class-I aminoacyl-tRNA synthetase family.</text>
</comment>
<accession>B9JCA5</accession>
<organism>
    <name type="scientific">Rhizobium rhizogenes (strain K84 / ATCC BAA-868)</name>
    <name type="common">Agrobacterium radiobacter</name>
    <dbReference type="NCBI Taxonomy" id="311403"/>
    <lineage>
        <taxon>Bacteria</taxon>
        <taxon>Pseudomonadati</taxon>
        <taxon>Pseudomonadota</taxon>
        <taxon>Alphaproteobacteria</taxon>
        <taxon>Hyphomicrobiales</taxon>
        <taxon>Rhizobiaceae</taxon>
        <taxon>Rhizobium/Agrobacterium group</taxon>
        <taxon>Rhizobium</taxon>
    </lineage>
</organism>
<name>SYC_RHIR8</name>
<keyword id="KW-0030">Aminoacyl-tRNA synthetase</keyword>
<keyword id="KW-0067">ATP-binding</keyword>
<keyword id="KW-0963">Cytoplasm</keyword>
<keyword id="KW-0436">Ligase</keyword>
<keyword id="KW-0479">Metal-binding</keyword>
<keyword id="KW-0547">Nucleotide-binding</keyword>
<keyword id="KW-0648">Protein biosynthesis</keyword>
<keyword id="KW-0862">Zinc</keyword>
<dbReference type="EC" id="6.1.1.16" evidence="1"/>
<dbReference type="EMBL" id="CP000628">
    <property type="protein sequence ID" value="ACM26026.1"/>
    <property type="molecule type" value="Genomic_DNA"/>
</dbReference>
<dbReference type="RefSeq" id="WP_007693020.1">
    <property type="nucleotide sequence ID" value="NC_011985.1"/>
</dbReference>
<dbReference type="SMR" id="B9JCA5"/>
<dbReference type="STRING" id="311403.Arad_1637"/>
<dbReference type="GeneID" id="86847905"/>
<dbReference type="KEGG" id="ara:Arad_1637"/>
<dbReference type="eggNOG" id="COG0215">
    <property type="taxonomic scope" value="Bacteria"/>
</dbReference>
<dbReference type="HOGENOM" id="CLU_013528_0_1_5"/>
<dbReference type="Proteomes" id="UP000001600">
    <property type="component" value="Chromosome 1"/>
</dbReference>
<dbReference type="GO" id="GO:0005829">
    <property type="term" value="C:cytosol"/>
    <property type="evidence" value="ECO:0007669"/>
    <property type="project" value="TreeGrafter"/>
</dbReference>
<dbReference type="GO" id="GO:0005524">
    <property type="term" value="F:ATP binding"/>
    <property type="evidence" value="ECO:0007669"/>
    <property type="project" value="UniProtKB-UniRule"/>
</dbReference>
<dbReference type="GO" id="GO:0004817">
    <property type="term" value="F:cysteine-tRNA ligase activity"/>
    <property type="evidence" value="ECO:0007669"/>
    <property type="project" value="UniProtKB-UniRule"/>
</dbReference>
<dbReference type="GO" id="GO:0008270">
    <property type="term" value="F:zinc ion binding"/>
    <property type="evidence" value="ECO:0007669"/>
    <property type="project" value="UniProtKB-UniRule"/>
</dbReference>
<dbReference type="GO" id="GO:0006423">
    <property type="term" value="P:cysteinyl-tRNA aminoacylation"/>
    <property type="evidence" value="ECO:0007669"/>
    <property type="project" value="UniProtKB-UniRule"/>
</dbReference>
<dbReference type="CDD" id="cd00672">
    <property type="entry name" value="CysRS_core"/>
    <property type="match status" value="1"/>
</dbReference>
<dbReference type="FunFam" id="3.40.50.620:FF:000068">
    <property type="entry name" value="Cysteine--tRNA ligase"/>
    <property type="match status" value="1"/>
</dbReference>
<dbReference type="Gene3D" id="3.40.50.620">
    <property type="entry name" value="HUPs"/>
    <property type="match status" value="1"/>
</dbReference>
<dbReference type="HAMAP" id="MF_00041">
    <property type="entry name" value="Cys_tRNA_synth"/>
    <property type="match status" value="1"/>
</dbReference>
<dbReference type="InterPro" id="IPR015803">
    <property type="entry name" value="Cys-tRNA-ligase"/>
</dbReference>
<dbReference type="InterPro" id="IPR024909">
    <property type="entry name" value="Cys-tRNA/MSH_ligase"/>
</dbReference>
<dbReference type="InterPro" id="IPR014729">
    <property type="entry name" value="Rossmann-like_a/b/a_fold"/>
</dbReference>
<dbReference type="InterPro" id="IPR032678">
    <property type="entry name" value="tRNA-synt_1_cat_dom"/>
</dbReference>
<dbReference type="InterPro" id="IPR009080">
    <property type="entry name" value="tRNAsynth_Ia_anticodon-bd"/>
</dbReference>
<dbReference type="NCBIfam" id="TIGR00435">
    <property type="entry name" value="cysS"/>
    <property type="match status" value="1"/>
</dbReference>
<dbReference type="PANTHER" id="PTHR10890:SF3">
    <property type="entry name" value="CYSTEINE--TRNA LIGASE, CYTOPLASMIC"/>
    <property type="match status" value="1"/>
</dbReference>
<dbReference type="PANTHER" id="PTHR10890">
    <property type="entry name" value="CYSTEINYL-TRNA SYNTHETASE"/>
    <property type="match status" value="1"/>
</dbReference>
<dbReference type="Pfam" id="PF01406">
    <property type="entry name" value="tRNA-synt_1e"/>
    <property type="match status" value="1"/>
</dbReference>
<dbReference type="PRINTS" id="PR00983">
    <property type="entry name" value="TRNASYNTHCYS"/>
</dbReference>
<dbReference type="SUPFAM" id="SSF47323">
    <property type="entry name" value="Anticodon-binding domain of a subclass of class I aminoacyl-tRNA synthetases"/>
    <property type="match status" value="1"/>
</dbReference>
<dbReference type="SUPFAM" id="SSF52374">
    <property type="entry name" value="Nucleotidylyl transferase"/>
    <property type="match status" value="1"/>
</dbReference>
<reference key="1">
    <citation type="journal article" date="2009" name="J. Bacteriol.">
        <title>Genome sequences of three Agrobacterium biovars help elucidate the evolution of multichromosome genomes in bacteria.</title>
        <authorList>
            <person name="Slater S.C."/>
            <person name="Goldman B.S."/>
            <person name="Goodner B."/>
            <person name="Setubal J.C."/>
            <person name="Farrand S.K."/>
            <person name="Nester E.W."/>
            <person name="Burr T.J."/>
            <person name="Banta L."/>
            <person name="Dickerman A.W."/>
            <person name="Paulsen I."/>
            <person name="Otten L."/>
            <person name="Suen G."/>
            <person name="Welch R."/>
            <person name="Almeida N.F."/>
            <person name="Arnold F."/>
            <person name="Burton O.T."/>
            <person name="Du Z."/>
            <person name="Ewing A."/>
            <person name="Godsy E."/>
            <person name="Heisel S."/>
            <person name="Houmiel K.L."/>
            <person name="Jhaveri J."/>
            <person name="Lu J."/>
            <person name="Miller N.M."/>
            <person name="Norton S."/>
            <person name="Chen Q."/>
            <person name="Phoolcharoen W."/>
            <person name="Ohlin V."/>
            <person name="Ondrusek D."/>
            <person name="Pride N."/>
            <person name="Stricklin S.L."/>
            <person name="Sun J."/>
            <person name="Wheeler C."/>
            <person name="Wilson L."/>
            <person name="Zhu H."/>
            <person name="Wood D.W."/>
        </authorList>
    </citation>
    <scope>NUCLEOTIDE SEQUENCE [LARGE SCALE GENOMIC DNA]</scope>
    <source>
        <strain>K84 / ATCC BAA-868</strain>
    </source>
</reference>
<gene>
    <name evidence="1" type="primary">cysS</name>
    <name type="ordered locus">Arad_1637</name>
</gene>
<sequence>MGTEPQLKLYNTLTREKVDFQPIDRENVRLYVCGPTVYDFAHIGNARPAIVFDVLFRLLRQVYGENHVTYARNITDVDDKINARALRDHPGLPLNEAIRLVTEKTETQYYQDTTALGCLEPTVQPRATDNIAQMIEIIEKLIARGHAYQAAGEVLFDTKSMADYGQLSKRNLDEQQAGARIAVDAHKKSPGDFVLWKLSAENEPGWESPWGRGRPGWHIECSAMSGRYLGDVFDIHGGGLDLIFPHHENEIAQSRCAHGTDVMANVWMHNGFLQVEGRKMSKSEGNFVTIYELLQTEKLGGRTWPGAVLRLAMLMTHYREPIDFSVKRLEEAERLLAKWPAADIGNAKPDATVLVALADDLNTVVAIQALHALAQAANADASILPVFAASAALLGLLPEKVEMDDAVASEIDARVRARLELLKAKNFAEADKIRDTLLAEGIQLKDGKDPATGERITTWEVKR</sequence>
<feature type="chain" id="PRO_1000199029" description="Cysteine--tRNA ligase">
    <location>
        <begin position="1"/>
        <end position="463"/>
    </location>
</feature>
<feature type="short sequence motif" description="'HIGH' region">
    <location>
        <begin position="35"/>
        <end position="45"/>
    </location>
</feature>
<feature type="short sequence motif" description="'KMSKS' region">
    <location>
        <begin position="279"/>
        <end position="283"/>
    </location>
</feature>
<feature type="binding site" evidence="1">
    <location>
        <position position="33"/>
    </location>
    <ligand>
        <name>Zn(2+)</name>
        <dbReference type="ChEBI" id="CHEBI:29105"/>
    </ligand>
</feature>
<feature type="binding site" evidence="1">
    <location>
        <position position="221"/>
    </location>
    <ligand>
        <name>Zn(2+)</name>
        <dbReference type="ChEBI" id="CHEBI:29105"/>
    </ligand>
</feature>
<feature type="binding site" evidence="1">
    <location>
        <position position="246"/>
    </location>
    <ligand>
        <name>Zn(2+)</name>
        <dbReference type="ChEBI" id="CHEBI:29105"/>
    </ligand>
</feature>
<feature type="binding site" evidence="1">
    <location>
        <position position="250"/>
    </location>
    <ligand>
        <name>Zn(2+)</name>
        <dbReference type="ChEBI" id="CHEBI:29105"/>
    </ligand>
</feature>
<feature type="binding site" evidence="1">
    <location>
        <position position="282"/>
    </location>
    <ligand>
        <name>ATP</name>
        <dbReference type="ChEBI" id="CHEBI:30616"/>
    </ligand>
</feature>
<evidence type="ECO:0000255" key="1">
    <source>
        <dbReference type="HAMAP-Rule" id="MF_00041"/>
    </source>
</evidence>
<protein>
    <recommendedName>
        <fullName evidence="1">Cysteine--tRNA ligase</fullName>
        <ecNumber evidence="1">6.1.1.16</ecNumber>
    </recommendedName>
    <alternativeName>
        <fullName evidence="1">Cysteinyl-tRNA synthetase</fullName>
        <shortName evidence="1">CysRS</shortName>
    </alternativeName>
</protein>
<proteinExistence type="inferred from homology"/>